<keyword id="KW-0963">Cytoplasm</keyword>
<keyword id="KW-0255">Endonuclease</keyword>
<keyword id="KW-0378">Hydrolase</keyword>
<keyword id="KW-0479">Metal-binding</keyword>
<keyword id="KW-0540">Nuclease</keyword>
<keyword id="KW-1185">Reference proteome</keyword>
<keyword id="KW-0690">Ribosome biogenesis</keyword>
<keyword id="KW-0698">rRNA processing</keyword>
<keyword id="KW-0862">Zinc</keyword>
<sequence>MSQVILDLQLACEDNSGLPEESQFQTWLNAVIPQFQEESEVTIRVVDTAESHSLNLTYRGKDKPTNVLSFPFEVPPGMEMSLLGDLVICRQMVEKEAQEQGKPLEAHWAHMVVHGSLHLLGYDHIEDDEAEEMEALETEIMLALGYEDPYIAEKE</sequence>
<gene>
    <name evidence="1" type="primary">ybeY</name>
    <name type="ordered locus">Z0808</name>
    <name type="ordered locus">ECs0697</name>
</gene>
<feature type="chain" id="PRO_0000102450" description="Endoribonuclease YbeY">
    <location>
        <begin position="1"/>
        <end position="155"/>
    </location>
</feature>
<feature type="binding site" evidence="1">
    <location>
        <position position="114"/>
    </location>
    <ligand>
        <name>Zn(2+)</name>
        <dbReference type="ChEBI" id="CHEBI:29105"/>
        <note>catalytic</note>
    </ligand>
</feature>
<feature type="binding site" evidence="1">
    <location>
        <position position="118"/>
    </location>
    <ligand>
        <name>Zn(2+)</name>
        <dbReference type="ChEBI" id="CHEBI:29105"/>
        <note>catalytic</note>
    </ligand>
</feature>
<feature type="binding site" evidence="1">
    <location>
        <position position="124"/>
    </location>
    <ligand>
        <name>Zn(2+)</name>
        <dbReference type="ChEBI" id="CHEBI:29105"/>
        <note>catalytic</note>
    </ligand>
</feature>
<proteinExistence type="inferred from homology"/>
<dbReference type="EC" id="3.1.-.-" evidence="1"/>
<dbReference type="EMBL" id="AE005174">
    <property type="protein sequence ID" value="AAG54992.1"/>
    <property type="molecule type" value="Genomic_DNA"/>
</dbReference>
<dbReference type="EMBL" id="BA000007">
    <property type="protein sequence ID" value="BAB34120.1"/>
    <property type="molecule type" value="Genomic_DNA"/>
</dbReference>
<dbReference type="PIR" id="A90716">
    <property type="entry name" value="A90716"/>
</dbReference>
<dbReference type="PIR" id="D85566">
    <property type="entry name" value="D85566"/>
</dbReference>
<dbReference type="RefSeq" id="NP_308724.1">
    <property type="nucleotide sequence ID" value="NC_002695.1"/>
</dbReference>
<dbReference type="RefSeq" id="WP_000084465.1">
    <property type="nucleotide sequence ID" value="NZ_VOAI01000012.1"/>
</dbReference>
<dbReference type="SMR" id="Q8XBK1"/>
<dbReference type="STRING" id="155864.Z0808"/>
<dbReference type="GeneID" id="917058"/>
<dbReference type="KEGG" id="ece:Z0808"/>
<dbReference type="KEGG" id="ecs:ECs_0697"/>
<dbReference type="PATRIC" id="fig|386585.9.peg.811"/>
<dbReference type="eggNOG" id="COG0319">
    <property type="taxonomic scope" value="Bacteria"/>
</dbReference>
<dbReference type="HOGENOM" id="CLU_106710_0_1_6"/>
<dbReference type="OMA" id="RMRIHPL"/>
<dbReference type="Proteomes" id="UP000000558">
    <property type="component" value="Chromosome"/>
</dbReference>
<dbReference type="Proteomes" id="UP000002519">
    <property type="component" value="Chromosome"/>
</dbReference>
<dbReference type="GO" id="GO:0005737">
    <property type="term" value="C:cytoplasm"/>
    <property type="evidence" value="ECO:0007669"/>
    <property type="project" value="UniProtKB-SubCell"/>
</dbReference>
<dbReference type="GO" id="GO:0004222">
    <property type="term" value="F:metalloendopeptidase activity"/>
    <property type="evidence" value="ECO:0007669"/>
    <property type="project" value="InterPro"/>
</dbReference>
<dbReference type="GO" id="GO:0004521">
    <property type="term" value="F:RNA endonuclease activity"/>
    <property type="evidence" value="ECO:0007669"/>
    <property type="project" value="UniProtKB-UniRule"/>
</dbReference>
<dbReference type="GO" id="GO:0008270">
    <property type="term" value="F:zinc ion binding"/>
    <property type="evidence" value="ECO:0007669"/>
    <property type="project" value="UniProtKB-UniRule"/>
</dbReference>
<dbReference type="GO" id="GO:0006364">
    <property type="term" value="P:rRNA processing"/>
    <property type="evidence" value="ECO:0007669"/>
    <property type="project" value="UniProtKB-UniRule"/>
</dbReference>
<dbReference type="FunFam" id="3.40.390.30:FF:000001">
    <property type="entry name" value="Endoribonuclease YbeY"/>
    <property type="match status" value="1"/>
</dbReference>
<dbReference type="Gene3D" id="3.40.390.30">
    <property type="entry name" value="Metalloproteases ('zincins'), catalytic domain"/>
    <property type="match status" value="1"/>
</dbReference>
<dbReference type="HAMAP" id="MF_00009">
    <property type="entry name" value="Endoribonucl_YbeY"/>
    <property type="match status" value="1"/>
</dbReference>
<dbReference type="InterPro" id="IPR023091">
    <property type="entry name" value="MetalPrtase_cat_dom_sf_prd"/>
</dbReference>
<dbReference type="InterPro" id="IPR002036">
    <property type="entry name" value="YbeY"/>
</dbReference>
<dbReference type="InterPro" id="IPR020549">
    <property type="entry name" value="YbeY_CS"/>
</dbReference>
<dbReference type="NCBIfam" id="TIGR00043">
    <property type="entry name" value="rRNA maturation RNase YbeY"/>
    <property type="match status" value="1"/>
</dbReference>
<dbReference type="PANTHER" id="PTHR46986">
    <property type="entry name" value="ENDORIBONUCLEASE YBEY, CHLOROPLASTIC"/>
    <property type="match status" value="1"/>
</dbReference>
<dbReference type="PANTHER" id="PTHR46986:SF1">
    <property type="entry name" value="ENDORIBONUCLEASE YBEY, CHLOROPLASTIC"/>
    <property type="match status" value="1"/>
</dbReference>
<dbReference type="Pfam" id="PF02130">
    <property type="entry name" value="YbeY"/>
    <property type="match status" value="1"/>
</dbReference>
<dbReference type="SUPFAM" id="SSF55486">
    <property type="entry name" value="Metalloproteases ('zincins'), catalytic domain"/>
    <property type="match status" value="1"/>
</dbReference>
<dbReference type="PROSITE" id="PS01306">
    <property type="entry name" value="UPF0054"/>
    <property type="match status" value="1"/>
</dbReference>
<name>YBEY_ECO57</name>
<organism>
    <name type="scientific">Escherichia coli O157:H7</name>
    <dbReference type="NCBI Taxonomy" id="83334"/>
    <lineage>
        <taxon>Bacteria</taxon>
        <taxon>Pseudomonadati</taxon>
        <taxon>Pseudomonadota</taxon>
        <taxon>Gammaproteobacteria</taxon>
        <taxon>Enterobacterales</taxon>
        <taxon>Enterobacteriaceae</taxon>
        <taxon>Escherichia</taxon>
    </lineage>
</organism>
<comment type="function">
    <text evidence="1">Single strand-specific metallo-endoribonuclease involved in late-stage 70S ribosome quality control and in maturation of the 3' terminus of the 16S rRNA.</text>
</comment>
<comment type="cofactor">
    <cofactor evidence="1">
        <name>Zn(2+)</name>
        <dbReference type="ChEBI" id="CHEBI:29105"/>
    </cofactor>
    <text evidence="1">Binds 1 zinc ion.</text>
</comment>
<comment type="subcellular location">
    <subcellularLocation>
        <location evidence="1">Cytoplasm</location>
    </subcellularLocation>
</comment>
<comment type="similarity">
    <text evidence="1">Belongs to the endoribonuclease YbeY family.</text>
</comment>
<accession>Q8XBK1</accession>
<protein>
    <recommendedName>
        <fullName evidence="1">Endoribonuclease YbeY</fullName>
        <ecNumber evidence="1">3.1.-.-</ecNumber>
    </recommendedName>
</protein>
<reference key="1">
    <citation type="journal article" date="2001" name="Nature">
        <title>Genome sequence of enterohaemorrhagic Escherichia coli O157:H7.</title>
        <authorList>
            <person name="Perna N.T."/>
            <person name="Plunkett G. III"/>
            <person name="Burland V."/>
            <person name="Mau B."/>
            <person name="Glasner J.D."/>
            <person name="Rose D.J."/>
            <person name="Mayhew G.F."/>
            <person name="Evans P.S."/>
            <person name="Gregor J."/>
            <person name="Kirkpatrick H.A."/>
            <person name="Posfai G."/>
            <person name="Hackett J."/>
            <person name="Klink S."/>
            <person name="Boutin A."/>
            <person name="Shao Y."/>
            <person name="Miller L."/>
            <person name="Grotbeck E.J."/>
            <person name="Davis N.W."/>
            <person name="Lim A."/>
            <person name="Dimalanta E.T."/>
            <person name="Potamousis K."/>
            <person name="Apodaca J."/>
            <person name="Anantharaman T.S."/>
            <person name="Lin J."/>
            <person name="Yen G."/>
            <person name="Schwartz D.C."/>
            <person name="Welch R.A."/>
            <person name="Blattner F.R."/>
        </authorList>
    </citation>
    <scope>NUCLEOTIDE SEQUENCE [LARGE SCALE GENOMIC DNA]</scope>
    <source>
        <strain>O157:H7 / EDL933 / ATCC 700927 / EHEC</strain>
    </source>
</reference>
<reference key="2">
    <citation type="journal article" date="2001" name="DNA Res.">
        <title>Complete genome sequence of enterohemorrhagic Escherichia coli O157:H7 and genomic comparison with a laboratory strain K-12.</title>
        <authorList>
            <person name="Hayashi T."/>
            <person name="Makino K."/>
            <person name="Ohnishi M."/>
            <person name="Kurokawa K."/>
            <person name="Ishii K."/>
            <person name="Yokoyama K."/>
            <person name="Han C.-G."/>
            <person name="Ohtsubo E."/>
            <person name="Nakayama K."/>
            <person name="Murata T."/>
            <person name="Tanaka M."/>
            <person name="Tobe T."/>
            <person name="Iida T."/>
            <person name="Takami H."/>
            <person name="Honda T."/>
            <person name="Sasakawa C."/>
            <person name="Ogasawara N."/>
            <person name="Yasunaga T."/>
            <person name="Kuhara S."/>
            <person name="Shiba T."/>
            <person name="Hattori M."/>
            <person name="Shinagawa H."/>
        </authorList>
    </citation>
    <scope>NUCLEOTIDE SEQUENCE [LARGE SCALE GENOMIC DNA]</scope>
    <source>
        <strain>O157:H7 / Sakai / RIMD 0509952 / EHEC</strain>
    </source>
</reference>
<evidence type="ECO:0000255" key="1">
    <source>
        <dbReference type="HAMAP-Rule" id="MF_00009"/>
    </source>
</evidence>